<feature type="chain" id="PRO_0000069233" description="C-C chemokine receptor type 2">
    <location>
        <begin position="1"/>
        <end position="360"/>
    </location>
</feature>
<feature type="topological domain" description="Extracellular" evidence="4">
    <location>
        <begin position="1"/>
        <end position="42"/>
    </location>
</feature>
<feature type="transmembrane region" description="Helical; Name=1" evidence="4">
    <location>
        <begin position="43"/>
        <end position="70"/>
    </location>
</feature>
<feature type="topological domain" description="Cytoplasmic" evidence="4">
    <location>
        <begin position="71"/>
        <end position="80"/>
    </location>
</feature>
<feature type="transmembrane region" description="Helical; Name=2" evidence="4">
    <location>
        <begin position="81"/>
        <end position="100"/>
    </location>
</feature>
<feature type="topological domain" description="Extracellular" evidence="4">
    <location>
        <begin position="101"/>
        <end position="114"/>
    </location>
</feature>
<feature type="transmembrane region" description="Helical; Name=3" evidence="4">
    <location>
        <begin position="115"/>
        <end position="136"/>
    </location>
</feature>
<feature type="topological domain" description="Cytoplasmic" evidence="4">
    <location>
        <begin position="137"/>
        <end position="153"/>
    </location>
</feature>
<feature type="transmembrane region" description="Helical; Name=4" evidence="4">
    <location>
        <begin position="154"/>
        <end position="178"/>
    </location>
</feature>
<feature type="topological domain" description="Extracellular" evidence="4">
    <location>
        <begin position="179"/>
        <end position="206"/>
    </location>
</feature>
<feature type="transmembrane region" description="Helical; Name=5" evidence="4">
    <location>
        <begin position="207"/>
        <end position="226"/>
    </location>
</feature>
<feature type="topological domain" description="Cytoplasmic" evidence="4">
    <location>
        <begin position="227"/>
        <end position="243"/>
    </location>
</feature>
<feature type="transmembrane region" description="Helical; Name=6" evidence="4">
    <location>
        <begin position="244"/>
        <end position="268"/>
    </location>
</feature>
<feature type="topological domain" description="Extracellular" evidence="4">
    <location>
        <begin position="269"/>
        <end position="285"/>
    </location>
</feature>
<feature type="transmembrane region" description="Helical; Name=7" evidence="4">
    <location>
        <begin position="286"/>
        <end position="309"/>
    </location>
</feature>
<feature type="topological domain" description="Cytoplasmic" evidence="4">
    <location>
        <begin position="310"/>
        <end position="360"/>
    </location>
</feature>
<feature type="modified residue" description="Sulfotyrosine" evidence="1">
    <location>
        <position position="26"/>
    </location>
</feature>
<feature type="modified residue" description="Phosphotyrosine; by JAK2" evidence="2">
    <location>
        <position position="139"/>
    </location>
</feature>
<feature type="glycosylation site" description="N-linked (GlcNAc...) asparagine" evidence="4">
    <location>
        <position position="14"/>
    </location>
</feature>
<feature type="disulfide bond" evidence="5">
    <location>
        <begin position="113"/>
        <end position="190"/>
    </location>
</feature>
<protein>
    <recommendedName>
        <fullName>C-C chemokine receptor type 2</fullName>
        <shortName>C-C CKR-2</shortName>
        <shortName>CC-CKR-2</shortName>
        <shortName>CCR-2</shortName>
        <shortName>CCR2</shortName>
    </recommendedName>
    <alternativeName>
        <fullName>Monocyte chemoattractant protein 1 receptor</fullName>
        <shortName>MCP-1-R</shortName>
    </alternativeName>
    <cdAntigenName>CD192</cdAntigenName>
</protein>
<gene>
    <name type="primary">CCR2</name>
    <name type="synonym">CMKBR2</name>
</gene>
<accession>O18793</accession>
<dbReference type="EMBL" id="AF013958">
    <property type="protein sequence ID" value="AAD11572.1"/>
    <property type="molecule type" value="mRNA"/>
</dbReference>
<dbReference type="RefSeq" id="NP_001027978.1">
    <molecule id="O18793-1"/>
    <property type="nucleotide sequence ID" value="NM_001032806.1"/>
</dbReference>
<dbReference type="SMR" id="O18793"/>
<dbReference type="FunCoup" id="O18793">
    <property type="interactions" value="608"/>
</dbReference>
<dbReference type="STRING" id="9544.ENSMMUP00000070568"/>
<dbReference type="GlyCosmos" id="O18793">
    <property type="glycosylation" value="1 site, No reported glycans"/>
</dbReference>
<dbReference type="GeneID" id="574098"/>
<dbReference type="KEGG" id="mcc:574098"/>
<dbReference type="CTD" id="729230"/>
<dbReference type="InParanoid" id="O18793"/>
<dbReference type="OrthoDB" id="9876908at2759"/>
<dbReference type="Proteomes" id="UP000006718">
    <property type="component" value="Unassembled WGS sequence"/>
</dbReference>
<dbReference type="GO" id="GO:0005737">
    <property type="term" value="C:cytoplasm"/>
    <property type="evidence" value="ECO:0000318"/>
    <property type="project" value="GO_Central"/>
</dbReference>
<dbReference type="GO" id="GO:0009897">
    <property type="term" value="C:external side of plasma membrane"/>
    <property type="evidence" value="ECO:0000318"/>
    <property type="project" value="GO_Central"/>
</dbReference>
<dbReference type="GO" id="GO:0005886">
    <property type="term" value="C:plasma membrane"/>
    <property type="evidence" value="ECO:0000250"/>
    <property type="project" value="UniProtKB"/>
</dbReference>
<dbReference type="GO" id="GO:0019957">
    <property type="term" value="F:C-C chemokine binding"/>
    <property type="evidence" value="ECO:0000318"/>
    <property type="project" value="GO_Central"/>
</dbReference>
<dbReference type="GO" id="GO:0016493">
    <property type="term" value="F:C-C chemokine receptor activity"/>
    <property type="evidence" value="ECO:0000318"/>
    <property type="project" value="GO_Central"/>
</dbReference>
<dbReference type="GO" id="GO:0001974">
    <property type="term" value="P:blood vessel remodeling"/>
    <property type="evidence" value="ECO:0007669"/>
    <property type="project" value="InterPro"/>
</dbReference>
<dbReference type="GO" id="GO:0019722">
    <property type="term" value="P:calcium-mediated signaling"/>
    <property type="evidence" value="ECO:0000318"/>
    <property type="project" value="GO_Central"/>
</dbReference>
<dbReference type="GO" id="GO:0060326">
    <property type="term" value="P:cell chemotaxis"/>
    <property type="evidence" value="ECO:0000318"/>
    <property type="project" value="GO_Central"/>
</dbReference>
<dbReference type="GO" id="GO:0006955">
    <property type="term" value="P:immune response"/>
    <property type="evidence" value="ECO:0000318"/>
    <property type="project" value="GO_Central"/>
</dbReference>
<dbReference type="GO" id="GO:0006954">
    <property type="term" value="P:inflammatory response"/>
    <property type="evidence" value="ECO:0000318"/>
    <property type="project" value="GO_Central"/>
</dbReference>
<dbReference type="GO" id="GO:0090594">
    <property type="term" value="P:inflammatory response to wounding"/>
    <property type="evidence" value="ECO:0000250"/>
    <property type="project" value="UniProtKB"/>
</dbReference>
<dbReference type="GO" id="GO:1905517">
    <property type="term" value="P:macrophage migration"/>
    <property type="evidence" value="ECO:0000250"/>
    <property type="project" value="UniProtKB"/>
</dbReference>
<dbReference type="GO" id="GO:0035696">
    <property type="term" value="P:monocyte extravasation"/>
    <property type="evidence" value="ECO:0000250"/>
    <property type="project" value="UniProtKB"/>
</dbReference>
<dbReference type="GO" id="GO:0007204">
    <property type="term" value="P:positive regulation of cytosolic calcium ion concentration"/>
    <property type="evidence" value="ECO:0000318"/>
    <property type="project" value="GO_Central"/>
</dbReference>
<dbReference type="GO" id="GO:0090026">
    <property type="term" value="P:positive regulation of monocyte chemotaxis"/>
    <property type="evidence" value="ECO:0000250"/>
    <property type="project" value="UniProtKB"/>
</dbReference>
<dbReference type="GO" id="GO:0051968">
    <property type="term" value="P:positive regulation of synaptic transmission, glutamatergic"/>
    <property type="evidence" value="ECO:0000250"/>
    <property type="project" value="UniProtKB"/>
</dbReference>
<dbReference type="GO" id="GO:2000412">
    <property type="term" value="P:positive regulation of thymocyte migration"/>
    <property type="evidence" value="ECO:0000250"/>
    <property type="project" value="UniProtKB"/>
</dbReference>
<dbReference type="GO" id="GO:0050727">
    <property type="term" value="P:regulation of inflammatory response"/>
    <property type="evidence" value="ECO:0000250"/>
    <property type="project" value="UniProtKB"/>
</dbReference>
<dbReference type="GO" id="GO:0002724">
    <property type="term" value="P:regulation of T cell cytokine production"/>
    <property type="evidence" value="ECO:0000250"/>
    <property type="project" value="UniProtKB"/>
</dbReference>
<dbReference type="GO" id="GO:0045580">
    <property type="term" value="P:regulation of T cell differentiation"/>
    <property type="evidence" value="ECO:0000250"/>
    <property type="project" value="UniProtKB"/>
</dbReference>
<dbReference type="GO" id="GO:0019233">
    <property type="term" value="P:sensory perception of pain"/>
    <property type="evidence" value="ECO:0000250"/>
    <property type="project" value="UniProtKB"/>
</dbReference>
<dbReference type="CDD" id="cd15184">
    <property type="entry name" value="7tmA_CCR5_CCR2"/>
    <property type="match status" value="1"/>
</dbReference>
<dbReference type="FunFam" id="1.20.1070.10:FF:000026">
    <property type="entry name" value="C-C chemokine receptor type 5"/>
    <property type="match status" value="1"/>
</dbReference>
<dbReference type="Gene3D" id="1.20.1070.10">
    <property type="entry name" value="Rhodopsin 7-helix transmembrane proteins"/>
    <property type="match status" value="1"/>
</dbReference>
<dbReference type="InterPro" id="IPR050119">
    <property type="entry name" value="CCR1-9-like"/>
</dbReference>
<dbReference type="InterPro" id="IPR002237">
    <property type="entry name" value="Chemokine_CCR2"/>
</dbReference>
<dbReference type="InterPro" id="IPR000355">
    <property type="entry name" value="Chemokine_rcpt"/>
</dbReference>
<dbReference type="InterPro" id="IPR000276">
    <property type="entry name" value="GPCR_Rhodpsn"/>
</dbReference>
<dbReference type="InterPro" id="IPR017452">
    <property type="entry name" value="GPCR_Rhodpsn_7TM"/>
</dbReference>
<dbReference type="PANTHER" id="PTHR10489:SF913">
    <property type="entry name" value="C-C CHEMOKINE RECEPTOR TYPE 2"/>
    <property type="match status" value="1"/>
</dbReference>
<dbReference type="PANTHER" id="PTHR10489">
    <property type="entry name" value="CELL ADHESION MOLECULE"/>
    <property type="match status" value="1"/>
</dbReference>
<dbReference type="Pfam" id="PF00001">
    <property type="entry name" value="7tm_1"/>
    <property type="match status" value="1"/>
</dbReference>
<dbReference type="PRINTS" id="PR00657">
    <property type="entry name" value="CCCHEMOKINER"/>
</dbReference>
<dbReference type="PRINTS" id="PR01107">
    <property type="entry name" value="CHEMOKINER2"/>
</dbReference>
<dbReference type="PRINTS" id="PR00237">
    <property type="entry name" value="GPCRRHODOPSN"/>
</dbReference>
<dbReference type="SMART" id="SM01381">
    <property type="entry name" value="7TM_GPCR_Srsx"/>
    <property type="match status" value="1"/>
</dbReference>
<dbReference type="SUPFAM" id="SSF81321">
    <property type="entry name" value="Family A G protein-coupled receptor-like"/>
    <property type="match status" value="1"/>
</dbReference>
<dbReference type="PROSITE" id="PS00237">
    <property type="entry name" value="G_PROTEIN_RECEP_F1_1"/>
    <property type="match status" value="1"/>
</dbReference>
<dbReference type="PROSITE" id="PS50262">
    <property type="entry name" value="G_PROTEIN_RECEP_F1_2"/>
    <property type="match status" value="1"/>
</dbReference>
<proteinExistence type="evidence at transcript level"/>
<evidence type="ECO:0000250" key="1"/>
<evidence type="ECO:0000250" key="2">
    <source>
        <dbReference type="UniProtKB" id="P41597"/>
    </source>
</evidence>
<evidence type="ECO:0000250" key="3">
    <source>
        <dbReference type="UniProtKB" id="P51683"/>
    </source>
</evidence>
<evidence type="ECO:0000255" key="4"/>
<evidence type="ECO:0000255" key="5">
    <source>
        <dbReference type="PROSITE-ProRule" id="PRU00521"/>
    </source>
</evidence>
<keyword id="KW-0025">Alternative splicing</keyword>
<keyword id="KW-1003">Cell membrane</keyword>
<keyword id="KW-1015">Disulfide bond</keyword>
<keyword id="KW-0297">G-protein coupled receptor</keyword>
<keyword id="KW-0325">Glycoprotein</keyword>
<keyword id="KW-0395">Inflammatory response</keyword>
<keyword id="KW-0472">Membrane</keyword>
<keyword id="KW-0597">Phosphoprotein</keyword>
<keyword id="KW-0675">Receptor</keyword>
<keyword id="KW-1185">Reference proteome</keyword>
<keyword id="KW-0765">Sulfation</keyword>
<keyword id="KW-0807">Transducer</keyword>
<keyword id="KW-0812">Transmembrane</keyword>
<keyword id="KW-1133">Transmembrane helix</keyword>
<name>CCR2_MACMU</name>
<reference key="1">
    <citation type="journal article" date="2001" name="AIDS Res. Hum. Retroviruses">
        <title>Identification and comparison of eleven rhesus macaque chemokine receptors.</title>
        <authorList>
            <person name="Margulies B.J."/>
            <person name="Hauer D.A."/>
            <person name="Clements J.E."/>
        </authorList>
    </citation>
    <scope>NUCLEOTIDE SEQUENCE [MRNA]</scope>
</reference>
<sequence length="360" mass="41140">MLSTSRSRFIRNTNGSGEEVTTFFDYDYGAPCHKFDVKQIGAQLLPPLYSLVFIFGFVGNMLVVLILINCKKLKSLTDIYLLNLAISDLLFLITLPLWAHSAANEWVFGNAMCKLFTGLYHIGYLGGIFFIILLTIDRYLAIVHAVFALKARTVTFGVVTSVITWLVAVFASVPGIIFTKCQEEDSVYICGPYFPRGWNNFHTIMRNILGLVLPLLIMVICYSGILKTLLRCRNEKKRHRAVRLIFTIMIVYFLFWTPYNIVILLNTFQEFFGLSNCESTRQLDQATQVTETLGMTHCCINPIIYAFVGEKFRRYLSMFFRKYITKRFCKQCPVFYRETVDGVTSTNTPSTAEQEVSVGL</sequence>
<organism>
    <name type="scientific">Macaca mulatta</name>
    <name type="common">Rhesus macaque</name>
    <dbReference type="NCBI Taxonomy" id="9544"/>
    <lineage>
        <taxon>Eukaryota</taxon>
        <taxon>Metazoa</taxon>
        <taxon>Chordata</taxon>
        <taxon>Craniata</taxon>
        <taxon>Vertebrata</taxon>
        <taxon>Euteleostomi</taxon>
        <taxon>Mammalia</taxon>
        <taxon>Eutheria</taxon>
        <taxon>Euarchontoglires</taxon>
        <taxon>Primates</taxon>
        <taxon>Haplorrhini</taxon>
        <taxon>Catarrhini</taxon>
        <taxon>Cercopithecidae</taxon>
        <taxon>Cercopithecinae</taxon>
        <taxon>Macaca</taxon>
    </lineage>
</organism>
<comment type="function">
    <text evidence="2 3">Key functional receptor for CCL2 but can also bind CCL7 and CCL12 (By similarity). Its binding with CCL2 on monocytes and macrophages mediates chemotaxis and migration induction through the activation of the PI3K cascade, the small G protein Rac and lamellipodium protrusion (By similarity). Also acts as a receptor for the beta-defensin DEFB106A/DEFB106B (By similarity). Regulates the expression of T-cell inflammatory cytokines and T-cell differentiation, promoting the differentiation of T-cells into T-helper 17 cells (Th17) during inflammation (By similarity). Facilitates the export of mature thymocytes by enhancing directional movement of thymocytes to sphingosine-1-phosphate stimulation and up-regulation of S1P1R expression; signals through the JAK-STAT pathway to regulate FOXO1 activity leading to an increased expression of S1P1R (By similarity). Plays an important role in mediating peripheral nerve injury-induced neuropathic pain (By similarity). Increases NMDA-mediated synaptic transmission in both dopamine D1 and D2 receptor-containing neurons, which may be caused by MAPK/ERK-dependent phosphorylation of GRIN2B/NMDAR2B (By similarity). Mediates the recruitment of macrophages and monocytes to the injury site following brain injury (By similarity).</text>
</comment>
<comment type="subunit">
    <text evidence="2">Interacts with ARRB1 (By similarity). Interacts (via extracellular N-terminal region) with beta-defensin DEFB106A/DEFB106B; this interaction may preferentially require specific tyrosine sulfation on CCR2 (By similarity). Interacts with NUP85; the interaction is required for CCR2 clusters formation on the cell membrane and CCR2 signaling (By similarity).</text>
</comment>
<comment type="subcellular location">
    <subcellularLocation>
        <location evidence="2">Cell membrane</location>
        <topology evidence="4">Multi-pass membrane protein</topology>
    </subcellularLocation>
    <text evidence="2">The chemoattractant receptors are distributed throughout the cell surface; after stimulation with a ligand, such as CCL2, they are rapidly recruited into microdomain clusters at the cell membrane.</text>
</comment>
<comment type="alternative products">
    <event type="alternative splicing"/>
    <isoform>
        <id>O18793-1</id>
        <name>B</name>
        <sequence type="displayed"/>
    </isoform>
    <isoform>
        <id>O18793-2</id>
        <name>A</name>
        <sequence type="not described"/>
    </isoform>
</comment>
<comment type="PTM">
    <text evidence="2">N-glycosylated.</text>
</comment>
<comment type="PTM">
    <text evidence="2">Sulfation increases the affinity for both monomeric and dimeric CCL2 with stronger binding to the monomeric form (By similarity). Binding of sulfated CCR2 to CCL2 promotes conversion of CCL2 from dimer to monomer (By similarity).</text>
</comment>
<comment type="similarity">
    <text evidence="5">Belongs to the G-protein coupled receptor 1 family.</text>
</comment>